<proteinExistence type="inferred from homology"/>
<feature type="chain" id="PRO_1000008302" description="Translation initiation factor IF-2">
    <location>
        <begin position="1"/>
        <end position="837"/>
    </location>
</feature>
<feature type="domain" description="tr-type G">
    <location>
        <begin position="337"/>
        <end position="506"/>
    </location>
</feature>
<feature type="region of interest" description="Disordered" evidence="3">
    <location>
        <begin position="94"/>
        <end position="253"/>
    </location>
</feature>
<feature type="region of interest" description="G1" evidence="1">
    <location>
        <begin position="346"/>
        <end position="353"/>
    </location>
</feature>
<feature type="region of interest" description="G2" evidence="1">
    <location>
        <begin position="371"/>
        <end position="375"/>
    </location>
</feature>
<feature type="region of interest" description="G3" evidence="1">
    <location>
        <begin position="392"/>
        <end position="395"/>
    </location>
</feature>
<feature type="region of interest" description="G4" evidence="1">
    <location>
        <begin position="446"/>
        <end position="449"/>
    </location>
</feature>
<feature type="region of interest" description="G5" evidence="1">
    <location>
        <begin position="482"/>
        <end position="484"/>
    </location>
</feature>
<feature type="compositionally biased region" description="Basic and acidic residues" evidence="3">
    <location>
        <begin position="95"/>
        <end position="148"/>
    </location>
</feature>
<feature type="compositionally biased region" description="Low complexity" evidence="3">
    <location>
        <begin position="149"/>
        <end position="171"/>
    </location>
</feature>
<feature type="compositionally biased region" description="Basic and acidic residues" evidence="3">
    <location>
        <begin position="172"/>
        <end position="188"/>
    </location>
</feature>
<feature type="compositionally biased region" description="Basic and acidic residues" evidence="3">
    <location>
        <begin position="220"/>
        <end position="229"/>
    </location>
</feature>
<feature type="compositionally biased region" description="Basic residues" evidence="3">
    <location>
        <begin position="230"/>
        <end position="244"/>
    </location>
</feature>
<feature type="binding site" evidence="2">
    <location>
        <begin position="346"/>
        <end position="353"/>
    </location>
    <ligand>
        <name>GTP</name>
        <dbReference type="ChEBI" id="CHEBI:37565"/>
    </ligand>
</feature>
<feature type="binding site" evidence="2">
    <location>
        <begin position="392"/>
        <end position="396"/>
    </location>
    <ligand>
        <name>GTP</name>
        <dbReference type="ChEBI" id="CHEBI:37565"/>
    </ligand>
</feature>
<feature type="binding site" evidence="2">
    <location>
        <begin position="446"/>
        <end position="449"/>
    </location>
    <ligand>
        <name>GTP</name>
        <dbReference type="ChEBI" id="CHEBI:37565"/>
    </ligand>
</feature>
<gene>
    <name evidence="2" type="primary">infB</name>
    <name type="ordered locus">PSPA7_5462</name>
</gene>
<accession>A6VCK1</accession>
<evidence type="ECO:0000250" key="1"/>
<evidence type="ECO:0000255" key="2">
    <source>
        <dbReference type="HAMAP-Rule" id="MF_00100"/>
    </source>
</evidence>
<evidence type="ECO:0000256" key="3">
    <source>
        <dbReference type="SAM" id="MobiDB-lite"/>
    </source>
</evidence>
<sequence>MTQVTVKELAQVVDTPVERLLLQMRDAGLPHTSAEQVVTDSEKQALLTHLKGSHGDRASEPRKITLQRKTTTTLKVGGSKTVSVEVRKKKTYVKRSPDEIEAERQRELEEQRAAEEAERLKAEEAAARQRAEEEARKAEEAARAKAAEEAVSAQPAAAVEVAAAEPVAKPAAAEERKKEEPRRVPKRDEDDERRDRKHTQHRPSVKEKEKAPAPRVAPRSTDEESDGYRRGGRGGKSKLKKRNQHGFQNPTGPIVREVNIGETITVAELAAQMSVKGAEVVKFMFKMGSPVTINQVLDQETAQLVAEELGHKVKLVSENALEEQLAESLKFEGEAVTRAPVVTVMGHVDHGKTSLLDYIRRAKVAAGEAGGITQHIGAYHVETERGMVTFLDTPGHAAFTAMRARGAQATDIVILVVAADDGVMPQTQEAVQHAKAAGVPIVVAVNKIDKPEANPDNIKNGLAALDVIPEEWGGDAPFVPVSAKLGTGVDELLEAVLLQAEVLELKATPSAPGRGVVVESRLDKGRGPVATVLVQDGTLRQGDMVLVGINYGRVRAMLDENGKPIKEAGPSIPVEILGLDGTPDAGDEMTVVADEKKAREVALFRQGKFREVKLARAHAGKLENIFENMGQEEKKTLNIVLKADVRGSLEALQGSLSGLGNDEVQVRVVGGGVGGITESDANLALASNAVLFGFNVRADAGARKIVEAEGLDMRYYNVIYDIIEDVKKALTGMLGSDLRENILGIAEVRDVFRSPKFGAIAGCMVTEGMVHRNRPIRVLRDDVVIFEGELESLRRFKDDVAEVRAGMECGIGVKSYNDVKVGDKIEVFEKVEVARSL</sequence>
<protein>
    <recommendedName>
        <fullName evidence="2">Translation initiation factor IF-2</fullName>
    </recommendedName>
</protein>
<organism>
    <name type="scientific">Pseudomonas paraeruginosa (strain DSM 24068 / PA7)</name>
    <name type="common">Pseudomonas aeruginosa (strain PA7)</name>
    <dbReference type="NCBI Taxonomy" id="381754"/>
    <lineage>
        <taxon>Bacteria</taxon>
        <taxon>Pseudomonadati</taxon>
        <taxon>Pseudomonadota</taxon>
        <taxon>Gammaproteobacteria</taxon>
        <taxon>Pseudomonadales</taxon>
        <taxon>Pseudomonadaceae</taxon>
        <taxon>Pseudomonas</taxon>
        <taxon>Pseudomonas paraeruginosa</taxon>
    </lineage>
</organism>
<reference key="1">
    <citation type="submission" date="2007-06" db="EMBL/GenBank/DDBJ databases">
        <authorList>
            <person name="Dodson R.J."/>
            <person name="Harkins D."/>
            <person name="Paulsen I.T."/>
        </authorList>
    </citation>
    <scope>NUCLEOTIDE SEQUENCE [LARGE SCALE GENOMIC DNA]</scope>
    <source>
        <strain>DSM 24068 / PA7</strain>
    </source>
</reference>
<name>IF2_PSEP7</name>
<comment type="function">
    <text evidence="2">One of the essential components for the initiation of protein synthesis. Protects formylmethionyl-tRNA from spontaneous hydrolysis and promotes its binding to the 30S ribosomal subunits. Also involved in the hydrolysis of GTP during the formation of the 70S ribosomal complex.</text>
</comment>
<comment type="subcellular location">
    <subcellularLocation>
        <location evidence="2">Cytoplasm</location>
    </subcellularLocation>
</comment>
<comment type="similarity">
    <text evidence="2">Belongs to the TRAFAC class translation factor GTPase superfamily. Classic translation factor GTPase family. IF-2 subfamily.</text>
</comment>
<dbReference type="EMBL" id="CP000744">
    <property type="protein sequence ID" value="ABR85823.1"/>
    <property type="molecule type" value="Genomic_DNA"/>
</dbReference>
<dbReference type="RefSeq" id="WP_003148734.1">
    <property type="nucleotide sequence ID" value="NC_009656.1"/>
</dbReference>
<dbReference type="SMR" id="A6VCK1"/>
<dbReference type="GeneID" id="77223279"/>
<dbReference type="KEGG" id="pap:PSPA7_5462"/>
<dbReference type="HOGENOM" id="CLU_006301_6_1_6"/>
<dbReference type="Proteomes" id="UP000001582">
    <property type="component" value="Chromosome"/>
</dbReference>
<dbReference type="GO" id="GO:0005829">
    <property type="term" value="C:cytosol"/>
    <property type="evidence" value="ECO:0007669"/>
    <property type="project" value="TreeGrafter"/>
</dbReference>
<dbReference type="GO" id="GO:0005525">
    <property type="term" value="F:GTP binding"/>
    <property type="evidence" value="ECO:0007669"/>
    <property type="project" value="UniProtKB-KW"/>
</dbReference>
<dbReference type="GO" id="GO:0003924">
    <property type="term" value="F:GTPase activity"/>
    <property type="evidence" value="ECO:0007669"/>
    <property type="project" value="UniProtKB-UniRule"/>
</dbReference>
<dbReference type="GO" id="GO:0003743">
    <property type="term" value="F:translation initiation factor activity"/>
    <property type="evidence" value="ECO:0007669"/>
    <property type="project" value="UniProtKB-UniRule"/>
</dbReference>
<dbReference type="CDD" id="cd01887">
    <property type="entry name" value="IF2_eIF5B"/>
    <property type="match status" value="1"/>
</dbReference>
<dbReference type="CDD" id="cd03702">
    <property type="entry name" value="IF2_mtIF2_II"/>
    <property type="match status" value="1"/>
</dbReference>
<dbReference type="CDD" id="cd03692">
    <property type="entry name" value="mtIF2_IVc"/>
    <property type="match status" value="1"/>
</dbReference>
<dbReference type="FunFam" id="2.40.30.10:FF:000007">
    <property type="entry name" value="Translation initiation factor IF-2"/>
    <property type="match status" value="1"/>
</dbReference>
<dbReference type="FunFam" id="2.40.30.10:FF:000008">
    <property type="entry name" value="Translation initiation factor IF-2"/>
    <property type="match status" value="1"/>
</dbReference>
<dbReference type="FunFam" id="3.40.50.10050:FF:000001">
    <property type="entry name" value="Translation initiation factor IF-2"/>
    <property type="match status" value="1"/>
</dbReference>
<dbReference type="FunFam" id="3.40.50.300:FF:000019">
    <property type="entry name" value="Translation initiation factor IF-2"/>
    <property type="match status" value="1"/>
</dbReference>
<dbReference type="Gene3D" id="3.40.50.300">
    <property type="entry name" value="P-loop containing nucleotide triphosphate hydrolases"/>
    <property type="match status" value="1"/>
</dbReference>
<dbReference type="Gene3D" id="3.30.56.50">
    <property type="entry name" value="Putative DNA-binding domain, N-terminal subdomain of bacterial translation initiation factor IF2"/>
    <property type="match status" value="1"/>
</dbReference>
<dbReference type="Gene3D" id="2.40.30.10">
    <property type="entry name" value="Translation factors"/>
    <property type="match status" value="2"/>
</dbReference>
<dbReference type="Gene3D" id="3.40.50.10050">
    <property type="entry name" value="Translation initiation factor IF- 2, domain 3"/>
    <property type="match status" value="1"/>
</dbReference>
<dbReference type="HAMAP" id="MF_00100_B">
    <property type="entry name" value="IF_2_B"/>
    <property type="match status" value="1"/>
</dbReference>
<dbReference type="InterPro" id="IPR009061">
    <property type="entry name" value="DNA-bd_dom_put_sf"/>
</dbReference>
<dbReference type="InterPro" id="IPR053905">
    <property type="entry name" value="EF-G-like_DII"/>
</dbReference>
<dbReference type="InterPro" id="IPR013575">
    <property type="entry name" value="IF2_assoc_dom_bac"/>
</dbReference>
<dbReference type="InterPro" id="IPR044145">
    <property type="entry name" value="IF2_II"/>
</dbReference>
<dbReference type="InterPro" id="IPR006847">
    <property type="entry name" value="IF2_N"/>
</dbReference>
<dbReference type="InterPro" id="IPR027417">
    <property type="entry name" value="P-loop_NTPase"/>
</dbReference>
<dbReference type="InterPro" id="IPR005225">
    <property type="entry name" value="Small_GTP-bd"/>
</dbReference>
<dbReference type="InterPro" id="IPR000795">
    <property type="entry name" value="T_Tr_GTP-bd_dom"/>
</dbReference>
<dbReference type="InterPro" id="IPR000178">
    <property type="entry name" value="TF_IF2_bacterial-like"/>
</dbReference>
<dbReference type="InterPro" id="IPR015760">
    <property type="entry name" value="TIF_IF2"/>
</dbReference>
<dbReference type="InterPro" id="IPR023115">
    <property type="entry name" value="TIF_IF2_dom3"/>
</dbReference>
<dbReference type="InterPro" id="IPR036925">
    <property type="entry name" value="TIF_IF2_dom3_sf"/>
</dbReference>
<dbReference type="InterPro" id="IPR009000">
    <property type="entry name" value="Transl_B-barrel_sf"/>
</dbReference>
<dbReference type="NCBIfam" id="TIGR00487">
    <property type="entry name" value="IF-2"/>
    <property type="match status" value="1"/>
</dbReference>
<dbReference type="NCBIfam" id="TIGR00231">
    <property type="entry name" value="small_GTP"/>
    <property type="match status" value="1"/>
</dbReference>
<dbReference type="PANTHER" id="PTHR43381:SF5">
    <property type="entry name" value="TR-TYPE G DOMAIN-CONTAINING PROTEIN"/>
    <property type="match status" value="1"/>
</dbReference>
<dbReference type="PANTHER" id="PTHR43381">
    <property type="entry name" value="TRANSLATION INITIATION FACTOR IF-2-RELATED"/>
    <property type="match status" value="1"/>
</dbReference>
<dbReference type="Pfam" id="PF22042">
    <property type="entry name" value="EF-G_D2"/>
    <property type="match status" value="1"/>
</dbReference>
<dbReference type="Pfam" id="PF00009">
    <property type="entry name" value="GTP_EFTU"/>
    <property type="match status" value="1"/>
</dbReference>
<dbReference type="Pfam" id="PF11987">
    <property type="entry name" value="IF-2"/>
    <property type="match status" value="1"/>
</dbReference>
<dbReference type="Pfam" id="PF08364">
    <property type="entry name" value="IF2_assoc"/>
    <property type="match status" value="1"/>
</dbReference>
<dbReference type="Pfam" id="PF04760">
    <property type="entry name" value="IF2_N"/>
    <property type="match status" value="2"/>
</dbReference>
<dbReference type="SUPFAM" id="SSF52156">
    <property type="entry name" value="Initiation factor IF2/eIF5b, domain 3"/>
    <property type="match status" value="1"/>
</dbReference>
<dbReference type="SUPFAM" id="SSF52540">
    <property type="entry name" value="P-loop containing nucleoside triphosphate hydrolases"/>
    <property type="match status" value="1"/>
</dbReference>
<dbReference type="SUPFAM" id="SSF46955">
    <property type="entry name" value="Putative DNA-binding domain"/>
    <property type="match status" value="1"/>
</dbReference>
<dbReference type="SUPFAM" id="SSF50447">
    <property type="entry name" value="Translation proteins"/>
    <property type="match status" value="2"/>
</dbReference>
<dbReference type="PROSITE" id="PS51722">
    <property type="entry name" value="G_TR_2"/>
    <property type="match status" value="1"/>
</dbReference>
<dbReference type="PROSITE" id="PS01176">
    <property type="entry name" value="IF2"/>
    <property type="match status" value="1"/>
</dbReference>
<keyword id="KW-0963">Cytoplasm</keyword>
<keyword id="KW-0342">GTP-binding</keyword>
<keyword id="KW-0396">Initiation factor</keyword>
<keyword id="KW-0547">Nucleotide-binding</keyword>
<keyword id="KW-0648">Protein biosynthesis</keyword>